<dbReference type="EC" id="2.1.1.144" evidence="1"/>
<dbReference type="EMBL" id="AP010918">
    <property type="protein sequence ID" value="BAH24601.1"/>
    <property type="molecule type" value="Genomic_DNA"/>
</dbReference>
<dbReference type="RefSeq" id="WP_003401538.1">
    <property type="nucleotide sequence ID" value="NZ_CP014566.1"/>
</dbReference>
<dbReference type="SMR" id="C1AJX2"/>
<dbReference type="KEGG" id="mbt:JTY_0304"/>
<dbReference type="HOGENOM" id="CLU_037990_5_2_11"/>
<dbReference type="GO" id="GO:0005737">
    <property type="term" value="C:cytoplasm"/>
    <property type="evidence" value="ECO:0007669"/>
    <property type="project" value="UniProtKB-SubCell"/>
</dbReference>
<dbReference type="GO" id="GO:0030798">
    <property type="term" value="F:trans-aconitate 2-methyltransferase activity"/>
    <property type="evidence" value="ECO:0007669"/>
    <property type="project" value="UniProtKB-UniRule"/>
</dbReference>
<dbReference type="GO" id="GO:0032259">
    <property type="term" value="P:methylation"/>
    <property type="evidence" value="ECO:0007669"/>
    <property type="project" value="UniProtKB-KW"/>
</dbReference>
<dbReference type="CDD" id="cd02440">
    <property type="entry name" value="AdoMet_MTases"/>
    <property type="match status" value="1"/>
</dbReference>
<dbReference type="Gene3D" id="1.10.150.290">
    <property type="entry name" value="S-adenosyl-L-methionine-dependent methyltransferases"/>
    <property type="match status" value="1"/>
</dbReference>
<dbReference type="Gene3D" id="3.40.50.150">
    <property type="entry name" value="Vaccinia Virus protein VP39"/>
    <property type="match status" value="1"/>
</dbReference>
<dbReference type="HAMAP" id="MF_00560">
    <property type="entry name" value="Tran_acon_Me_trans"/>
    <property type="match status" value="1"/>
</dbReference>
<dbReference type="InterPro" id="IPR041698">
    <property type="entry name" value="Methyltransf_25"/>
</dbReference>
<dbReference type="InterPro" id="IPR029063">
    <property type="entry name" value="SAM-dependent_MTases_sf"/>
</dbReference>
<dbReference type="InterPro" id="IPR023506">
    <property type="entry name" value="Trans-aconitate_MeTrfase"/>
</dbReference>
<dbReference type="InterPro" id="IPR023149">
    <property type="entry name" value="Trans_acon_MeTrfase_C"/>
</dbReference>
<dbReference type="NCBIfam" id="NF010703">
    <property type="entry name" value="PRK14103.1"/>
    <property type="match status" value="1"/>
</dbReference>
<dbReference type="PANTHER" id="PTHR43861:SF1">
    <property type="entry name" value="TRANS-ACONITATE 2-METHYLTRANSFERASE"/>
    <property type="match status" value="1"/>
</dbReference>
<dbReference type="PANTHER" id="PTHR43861">
    <property type="entry name" value="TRANS-ACONITATE 2-METHYLTRANSFERASE-RELATED"/>
    <property type="match status" value="1"/>
</dbReference>
<dbReference type="Pfam" id="PF13649">
    <property type="entry name" value="Methyltransf_25"/>
    <property type="match status" value="1"/>
</dbReference>
<dbReference type="SUPFAM" id="SSF53335">
    <property type="entry name" value="S-adenosyl-L-methionine-dependent methyltransferases"/>
    <property type="match status" value="1"/>
</dbReference>
<proteinExistence type="inferred from homology"/>
<comment type="function">
    <text evidence="1">Catalyzes the S-adenosylmethionine monomethyl esterification of trans-aconitate.</text>
</comment>
<comment type="catalytic activity">
    <reaction evidence="1">
        <text>trans-aconitate + S-adenosyl-L-methionine = (E)-3-(methoxycarbonyl)pent-2-enedioate + S-adenosyl-L-homocysteine</text>
        <dbReference type="Rhea" id="RHEA:14969"/>
        <dbReference type="ChEBI" id="CHEBI:15708"/>
        <dbReference type="ChEBI" id="CHEBI:57470"/>
        <dbReference type="ChEBI" id="CHEBI:57856"/>
        <dbReference type="ChEBI" id="CHEBI:59789"/>
        <dbReference type="EC" id="2.1.1.144"/>
    </reaction>
</comment>
<comment type="subcellular location">
    <subcellularLocation>
        <location evidence="1">Cytoplasm</location>
    </subcellularLocation>
</comment>
<comment type="similarity">
    <text evidence="1">Belongs to the methyltransferase superfamily. Tam family.</text>
</comment>
<evidence type="ECO:0000255" key="1">
    <source>
        <dbReference type="HAMAP-Rule" id="MF_00560"/>
    </source>
</evidence>
<sequence>MWDPDVYLAFSGHRNRPFYELVSRVGLERARRVVDLGCGPGHLTRYLARRWPGAVIEALDSSPEMVAAAAERGIDATTGDLRDWKPKPDTDVVVSNAALHWVPEHSDLLVRWVDELAPGSWIAVQIPGNFETPSHAAVRALARREPYAKLMRDIPFRVGAVVQSPAYYAELLMDTGCKVDVWETTYLHQLTGEHPVLDWITGSALVPVRERLSDESWQQFRQELIPLLNDAYPPRADGSTIFPFRRLFMVAEVGGARRSGG</sequence>
<keyword id="KW-0963">Cytoplasm</keyword>
<keyword id="KW-0489">Methyltransferase</keyword>
<keyword id="KW-0949">S-adenosyl-L-methionine</keyword>
<keyword id="KW-0808">Transferase</keyword>
<accession>C1AJX2</accession>
<gene>
    <name evidence="1" type="primary">tam</name>
    <name type="ordered locus">JTY_0304</name>
</gene>
<protein>
    <recommendedName>
        <fullName evidence="1">Trans-aconitate 2-methyltransferase</fullName>
        <ecNumber evidence="1">2.1.1.144</ecNumber>
    </recommendedName>
</protein>
<reference key="1">
    <citation type="journal article" date="2009" name="Vaccine">
        <title>Whole genome sequence analysis of Mycobacterium bovis bacillus Calmette-Guerin (BCG) Tokyo 172: a comparative study of BCG vaccine substrains.</title>
        <authorList>
            <person name="Seki M."/>
            <person name="Honda I."/>
            <person name="Fujita I."/>
            <person name="Yano I."/>
            <person name="Yamamoto S."/>
            <person name="Koyama A."/>
        </authorList>
    </citation>
    <scope>NUCLEOTIDE SEQUENCE [LARGE SCALE GENOMIC DNA]</scope>
    <source>
        <strain>BCG / Tokyo 172 / ATCC 35737 / TMC 1019</strain>
    </source>
</reference>
<name>TAM_MYCBT</name>
<organism>
    <name type="scientific">Mycobacterium bovis (strain BCG / Tokyo 172 / ATCC 35737 / TMC 1019)</name>
    <dbReference type="NCBI Taxonomy" id="561275"/>
    <lineage>
        <taxon>Bacteria</taxon>
        <taxon>Bacillati</taxon>
        <taxon>Actinomycetota</taxon>
        <taxon>Actinomycetes</taxon>
        <taxon>Mycobacteriales</taxon>
        <taxon>Mycobacteriaceae</taxon>
        <taxon>Mycobacterium</taxon>
        <taxon>Mycobacterium tuberculosis complex</taxon>
    </lineage>
</organism>
<feature type="chain" id="PRO_1000196657" description="Trans-aconitate 2-methyltransferase">
    <location>
        <begin position="1"/>
        <end position="261"/>
    </location>
</feature>